<dbReference type="EC" id="3.6.-.-" evidence="1"/>
<dbReference type="EMBL" id="CP000687">
    <property type="protein sequence ID" value="ABY70067.1"/>
    <property type="molecule type" value="Genomic_DNA"/>
</dbReference>
<dbReference type="RefSeq" id="WP_005602146.1">
    <property type="nucleotide sequence ID" value="NC_010278.1"/>
</dbReference>
<dbReference type="SMR" id="B0BR82"/>
<dbReference type="KEGG" id="apj:APJL_1515"/>
<dbReference type="HOGENOM" id="CLU_019624_4_1_6"/>
<dbReference type="Proteomes" id="UP000008547">
    <property type="component" value="Chromosome"/>
</dbReference>
<dbReference type="GO" id="GO:0005829">
    <property type="term" value="C:cytosol"/>
    <property type="evidence" value="ECO:0007669"/>
    <property type="project" value="TreeGrafter"/>
</dbReference>
<dbReference type="GO" id="GO:0005525">
    <property type="term" value="F:GTP binding"/>
    <property type="evidence" value="ECO:0007669"/>
    <property type="project" value="UniProtKB-UniRule"/>
</dbReference>
<dbReference type="GO" id="GO:0003924">
    <property type="term" value="F:GTPase activity"/>
    <property type="evidence" value="ECO:0007669"/>
    <property type="project" value="UniProtKB-UniRule"/>
</dbReference>
<dbReference type="GO" id="GO:0046872">
    <property type="term" value="F:metal ion binding"/>
    <property type="evidence" value="ECO:0007669"/>
    <property type="project" value="UniProtKB-KW"/>
</dbReference>
<dbReference type="GO" id="GO:0030488">
    <property type="term" value="P:tRNA methylation"/>
    <property type="evidence" value="ECO:0007669"/>
    <property type="project" value="TreeGrafter"/>
</dbReference>
<dbReference type="GO" id="GO:0002098">
    <property type="term" value="P:tRNA wobble uridine modification"/>
    <property type="evidence" value="ECO:0007669"/>
    <property type="project" value="TreeGrafter"/>
</dbReference>
<dbReference type="CDD" id="cd04164">
    <property type="entry name" value="trmE"/>
    <property type="match status" value="1"/>
</dbReference>
<dbReference type="CDD" id="cd14858">
    <property type="entry name" value="TrmE_N"/>
    <property type="match status" value="1"/>
</dbReference>
<dbReference type="FunFam" id="3.30.1360.120:FF:000001">
    <property type="entry name" value="tRNA modification GTPase MnmE"/>
    <property type="match status" value="1"/>
</dbReference>
<dbReference type="FunFam" id="3.40.50.300:FF:000249">
    <property type="entry name" value="tRNA modification GTPase MnmE"/>
    <property type="match status" value="1"/>
</dbReference>
<dbReference type="Gene3D" id="3.40.50.300">
    <property type="entry name" value="P-loop containing nucleotide triphosphate hydrolases"/>
    <property type="match status" value="1"/>
</dbReference>
<dbReference type="Gene3D" id="3.30.1360.120">
    <property type="entry name" value="Probable tRNA modification gtpase trme, domain 1"/>
    <property type="match status" value="1"/>
</dbReference>
<dbReference type="Gene3D" id="1.20.120.430">
    <property type="entry name" value="tRNA modification GTPase MnmE domain 2"/>
    <property type="match status" value="1"/>
</dbReference>
<dbReference type="HAMAP" id="MF_00379">
    <property type="entry name" value="GTPase_MnmE"/>
    <property type="match status" value="1"/>
</dbReference>
<dbReference type="InterPro" id="IPR031168">
    <property type="entry name" value="G_TrmE"/>
</dbReference>
<dbReference type="InterPro" id="IPR006073">
    <property type="entry name" value="GTP-bd"/>
</dbReference>
<dbReference type="InterPro" id="IPR018948">
    <property type="entry name" value="GTP-bd_TrmE_N"/>
</dbReference>
<dbReference type="InterPro" id="IPR004520">
    <property type="entry name" value="GTPase_MnmE"/>
</dbReference>
<dbReference type="InterPro" id="IPR027368">
    <property type="entry name" value="MnmE_dom2"/>
</dbReference>
<dbReference type="InterPro" id="IPR025867">
    <property type="entry name" value="MnmE_helical"/>
</dbReference>
<dbReference type="InterPro" id="IPR027417">
    <property type="entry name" value="P-loop_NTPase"/>
</dbReference>
<dbReference type="InterPro" id="IPR005225">
    <property type="entry name" value="Small_GTP-bd"/>
</dbReference>
<dbReference type="InterPro" id="IPR027266">
    <property type="entry name" value="TrmE/GcvT_dom1"/>
</dbReference>
<dbReference type="NCBIfam" id="TIGR00450">
    <property type="entry name" value="mnmE_trmE_thdF"/>
    <property type="match status" value="1"/>
</dbReference>
<dbReference type="NCBIfam" id="NF003661">
    <property type="entry name" value="PRK05291.1-3"/>
    <property type="match status" value="1"/>
</dbReference>
<dbReference type="NCBIfam" id="TIGR00231">
    <property type="entry name" value="small_GTP"/>
    <property type="match status" value="1"/>
</dbReference>
<dbReference type="PANTHER" id="PTHR42714">
    <property type="entry name" value="TRNA MODIFICATION GTPASE GTPBP3"/>
    <property type="match status" value="1"/>
</dbReference>
<dbReference type="PANTHER" id="PTHR42714:SF2">
    <property type="entry name" value="TRNA MODIFICATION GTPASE GTPBP3, MITOCHONDRIAL"/>
    <property type="match status" value="1"/>
</dbReference>
<dbReference type="Pfam" id="PF01926">
    <property type="entry name" value="MMR_HSR1"/>
    <property type="match status" value="1"/>
</dbReference>
<dbReference type="Pfam" id="PF12631">
    <property type="entry name" value="MnmE_helical"/>
    <property type="match status" value="1"/>
</dbReference>
<dbReference type="Pfam" id="PF10396">
    <property type="entry name" value="TrmE_N"/>
    <property type="match status" value="1"/>
</dbReference>
<dbReference type="SUPFAM" id="SSF52540">
    <property type="entry name" value="P-loop containing nucleoside triphosphate hydrolases"/>
    <property type="match status" value="1"/>
</dbReference>
<dbReference type="SUPFAM" id="SSF116878">
    <property type="entry name" value="TrmE connector domain"/>
    <property type="match status" value="1"/>
</dbReference>
<dbReference type="PROSITE" id="PS51709">
    <property type="entry name" value="G_TRME"/>
    <property type="match status" value="1"/>
</dbReference>
<feature type="chain" id="PRO_0000345700" description="tRNA modification GTPase MnmE">
    <location>
        <begin position="1"/>
        <end position="452"/>
    </location>
</feature>
<feature type="domain" description="TrmE-type G">
    <location>
        <begin position="214"/>
        <end position="375"/>
    </location>
</feature>
<feature type="binding site" evidence="1">
    <location>
        <position position="21"/>
    </location>
    <ligand>
        <name>(6S)-5-formyl-5,6,7,8-tetrahydrofolate</name>
        <dbReference type="ChEBI" id="CHEBI:57457"/>
    </ligand>
</feature>
<feature type="binding site" evidence="1">
    <location>
        <position position="78"/>
    </location>
    <ligand>
        <name>(6S)-5-formyl-5,6,7,8-tetrahydrofolate</name>
        <dbReference type="ChEBI" id="CHEBI:57457"/>
    </ligand>
</feature>
<feature type="binding site" evidence="1">
    <location>
        <position position="118"/>
    </location>
    <ligand>
        <name>(6S)-5-formyl-5,6,7,8-tetrahydrofolate</name>
        <dbReference type="ChEBI" id="CHEBI:57457"/>
    </ligand>
</feature>
<feature type="binding site" evidence="1">
    <location>
        <begin position="224"/>
        <end position="229"/>
    </location>
    <ligand>
        <name>GTP</name>
        <dbReference type="ChEBI" id="CHEBI:37565"/>
    </ligand>
</feature>
<feature type="binding site" evidence="1">
    <location>
        <position position="224"/>
    </location>
    <ligand>
        <name>K(+)</name>
        <dbReference type="ChEBI" id="CHEBI:29103"/>
    </ligand>
</feature>
<feature type="binding site" evidence="1">
    <location>
        <position position="228"/>
    </location>
    <ligand>
        <name>Mg(2+)</name>
        <dbReference type="ChEBI" id="CHEBI:18420"/>
    </ligand>
</feature>
<feature type="binding site" evidence="1">
    <location>
        <begin position="243"/>
        <end position="249"/>
    </location>
    <ligand>
        <name>GTP</name>
        <dbReference type="ChEBI" id="CHEBI:37565"/>
    </ligand>
</feature>
<feature type="binding site" evidence="1">
    <location>
        <position position="243"/>
    </location>
    <ligand>
        <name>K(+)</name>
        <dbReference type="ChEBI" id="CHEBI:29103"/>
    </ligand>
</feature>
<feature type="binding site" evidence="1">
    <location>
        <position position="245"/>
    </location>
    <ligand>
        <name>K(+)</name>
        <dbReference type="ChEBI" id="CHEBI:29103"/>
    </ligand>
</feature>
<feature type="binding site" evidence="1">
    <location>
        <position position="248"/>
    </location>
    <ligand>
        <name>K(+)</name>
        <dbReference type="ChEBI" id="CHEBI:29103"/>
    </ligand>
</feature>
<feature type="binding site" evidence="1">
    <location>
        <position position="249"/>
    </location>
    <ligand>
        <name>Mg(2+)</name>
        <dbReference type="ChEBI" id="CHEBI:18420"/>
    </ligand>
</feature>
<feature type="binding site" evidence="1">
    <location>
        <begin position="268"/>
        <end position="271"/>
    </location>
    <ligand>
        <name>GTP</name>
        <dbReference type="ChEBI" id="CHEBI:37565"/>
    </ligand>
</feature>
<feature type="binding site" evidence="1">
    <location>
        <position position="452"/>
    </location>
    <ligand>
        <name>(6S)-5-formyl-5,6,7,8-tetrahydrofolate</name>
        <dbReference type="ChEBI" id="CHEBI:57457"/>
    </ligand>
</feature>
<protein>
    <recommendedName>
        <fullName evidence="1">tRNA modification GTPase MnmE</fullName>
        <ecNumber evidence="1">3.6.-.-</ecNumber>
    </recommendedName>
</protein>
<accession>B0BR82</accession>
<comment type="function">
    <text evidence="1">Exhibits a very high intrinsic GTPase hydrolysis rate. Involved in the addition of a carboxymethylaminomethyl (cmnm) group at the wobble position (U34) of certain tRNAs, forming tRNA-cmnm(5)s(2)U34.</text>
</comment>
<comment type="cofactor">
    <cofactor evidence="1">
        <name>K(+)</name>
        <dbReference type="ChEBI" id="CHEBI:29103"/>
    </cofactor>
    <text evidence="1">Binds 1 potassium ion per subunit.</text>
</comment>
<comment type="subunit">
    <text evidence="1">Homodimer. Heterotetramer of two MnmE and two MnmG subunits.</text>
</comment>
<comment type="subcellular location">
    <subcellularLocation>
        <location evidence="1">Cytoplasm</location>
    </subcellularLocation>
</comment>
<comment type="similarity">
    <text evidence="1">Belongs to the TRAFAC class TrmE-Era-EngA-EngB-Septin-like GTPase superfamily. TrmE GTPase family.</text>
</comment>
<sequence length="452" mass="49486">MKDTIVAQATPIGRGGVGILRISGPLAQEVAKEVLGKELKPRLANYLPFKDQDGTVLDQGIALFFKAPNSFTGEDVLELQGHGGQVILDILLKRILTIKGIRIARAGEFSEQAFLNDKLDLAQAEAIADLIDATSEQAARSALKSLQGEFSNKINQLVDSVIYLRTYVEAAIDFPDEEIDFLADGKIEGHLNDIIRQLNGVRKEAKQGAILREGMKVVIAGRPNAGKSSLLNALAGREAAIVTNIAGTTRDVLREHIHIDGMPLHIIDTAGLREASDEVEKIGIQRAWDEIEQADHVLLMIDSTEQTAEAFKTEWADFLAKLPQNIPVTVIRNKVDLSGEAEGLQELDGFTLIRLSAQTKVGVDLLREHLKKSMGYQSSTEGGFLARRRHLQALETAAEHLERGHIQLTQFFAGELLAEELRMVQNALSEITGQFTSDDLLGNIFSSFCIGK</sequence>
<name>MNME_ACTPJ</name>
<proteinExistence type="inferred from homology"/>
<gene>
    <name evidence="1" type="primary">mnmE</name>
    <name evidence="1" type="synonym">trmE</name>
    <name type="ordered locus">APJL_1515</name>
</gene>
<keyword id="KW-0963">Cytoplasm</keyword>
<keyword id="KW-0342">GTP-binding</keyword>
<keyword id="KW-0378">Hydrolase</keyword>
<keyword id="KW-0460">Magnesium</keyword>
<keyword id="KW-0479">Metal-binding</keyword>
<keyword id="KW-0547">Nucleotide-binding</keyword>
<keyword id="KW-0630">Potassium</keyword>
<keyword id="KW-0819">tRNA processing</keyword>
<organism>
    <name type="scientific">Actinobacillus pleuropneumoniae serotype 3 (strain JL03)</name>
    <dbReference type="NCBI Taxonomy" id="434271"/>
    <lineage>
        <taxon>Bacteria</taxon>
        <taxon>Pseudomonadati</taxon>
        <taxon>Pseudomonadota</taxon>
        <taxon>Gammaproteobacteria</taxon>
        <taxon>Pasteurellales</taxon>
        <taxon>Pasteurellaceae</taxon>
        <taxon>Actinobacillus</taxon>
    </lineage>
</organism>
<evidence type="ECO:0000255" key="1">
    <source>
        <dbReference type="HAMAP-Rule" id="MF_00379"/>
    </source>
</evidence>
<reference key="1">
    <citation type="journal article" date="2008" name="PLoS ONE">
        <title>Genome biology of Actinobacillus pleuropneumoniae JL03, an isolate of serotype 3 prevalent in China.</title>
        <authorList>
            <person name="Xu Z."/>
            <person name="Zhou Y."/>
            <person name="Li L."/>
            <person name="Zhou R."/>
            <person name="Xiao S."/>
            <person name="Wan Y."/>
            <person name="Zhang S."/>
            <person name="Wang K."/>
            <person name="Li W."/>
            <person name="Li L."/>
            <person name="Jin H."/>
            <person name="Kang M."/>
            <person name="Dalai B."/>
            <person name="Li T."/>
            <person name="Liu L."/>
            <person name="Cheng Y."/>
            <person name="Zhang L."/>
            <person name="Xu T."/>
            <person name="Zheng H."/>
            <person name="Pu S."/>
            <person name="Wang B."/>
            <person name="Gu W."/>
            <person name="Zhang X.L."/>
            <person name="Zhu G.-F."/>
            <person name="Wang S."/>
            <person name="Zhao G.-P."/>
            <person name="Chen H."/>
        </authorList>
    </citation>
    <scope>NUCLEOTIDE SEQUENCE [LARGE SCALE GENOMIC DNA]</scope>
    <source>
        <strain>JL03</strain>
    </source>
</reference>